<organism>
    <name type="scientific">Gorilla gorilla gorilla</name>
    <name type="common">Western lowland gorilla</name>
    <dbReference type="NCBI Taxonomy" id="9595"/>
    <lineage>
        <taxon>Eukaryota</taxon>
        <taxon>Metazoa</taxon>
        <taxon>Chordata</taxon>
        <taxon>Craniata</taxon>
        <taxon>Vertebrata</taxon>
        <taxon>Euteleostomi</taxon>
        <taxon>Mammalia</taxon>
        <taxon>Eutheria</taxon>
        <taxon>Euarchontoglires</taxon>
        <taxon>Primates</taxon>
        <taxon>Haplorrhini</taxon>
        <taxon>Catarrhini</taxon>
        <taxon>Hominidae</taxon>
        <taxon>Gorilla</taxon>
    </lineage>
</organism>
<feature type="chain" id="PRO_0000117937" description="NADH-ubiquinone oxidoreductase chain 4">
    <location>
        <begin position="1"/>
        <end position="459"/>
    </location>
</feature>
<feature type="transmembrane region" description="Helical" evidence="3">
    <location>
        <begin position="22"/>
        <end position="42"/>
    </location>
</feature>
<feature type="transmembrane region" description="Helical" evidence="3">
    <location>
        <begin position="60"/>
        <end position="80"/>
    </location>
</feature>
<feature type="transmembrane region" description="Helical" evidence="3">
    <location>
        <begin position="94"/>
        <end position="112"/>
    </location>
</feature>
<feature type="transmembrane region" description="Helical" evidence="3">
    <location>
        <begin position="113"/>
        <end position="133"/>
    </location>
</feature>
<feature type="transmembrane region" description="Helical" evidence="3">
    <location>
        <begin position="145"/>
        <end position="165"/>
    </location>
</feature>
<feature type="transmembrane region" description="Helical" evidence="3">
    <location>
        <begin position="196"/>
        <end position="216"/>
    </location>
</feature>
<feature type="transmembrane region" description="Helical" evidence="3">
    <location>
        <begin position="224"/>
        <end position="244"/>
    </location>
</feature>
<feature type="transmembrane region" description="Helical" evidence="3">
    <location>
        <begin position="257"/>
        <end position="277"/>
    </location>
</feature>
<feature type="transmembrane region" description="Helical" evidence="3">
    <location>
        <begin position="284"/>
        <end position="303"/>
    </location>
</feature>
<feature type="transmembrane region" description="Helical" evidence="3">
    <location>
        <begin position="308"/>
        <end position="330"/>
    </location>
</feature>
<feature type="transmembrane region" description="Helical" evidence="3">
    <location>
        <begin position="351"/>
        <end position="371"/>
    </location>
</feature>
<feature type="transmembrane region" description="Helical" evidence="3">
    <location>
        <begin position="391"/>
        <end position="411"/>
    </location>
</feature>
<feature type="transmembrane region" description="Helical" evidence="3">
    <location>
        <begin position="435"/>
        <end position="455"/>
    </location>
</feature>
<dbReference type="EC" id="7.1.1.2" evidence="1"/>
<dbReference type="EMBL" id="D38114">
    <property type="protein sequence ID" value="BAA85283.1"/>
    <property type="molecule type" value="Genomic_DNA"/>
</dbReference>
<dbReference type="EMBL" id="V00658">
    <property type="protein sequence ID" value="CAA24022.1"/>
    <property type="molecule type" value="Genomic_DNA"/>
</dbReference>
<dbReference type="PIR" id="A00436">
    <property type="entry name" value="A00436"/>
</dbReference>
<dbReference type="PIR" id="A59154">
    <property type="entry name" value="A59154"/>
</dbReference>
<dbReference type="RefSeq" id="NP_008221.1">
    <property type="nucleotide sequence ID" value="NC_001645.1"/>
</dbReference>
<dbReference type="SMR" id="P03907"/>
<dbReference type="FunCoup" id="P03907">
    <property type="interactions" value="274"/>
</dbReference>
<dbReference type="STRING" id="9593.ENSGGOP00000024209"/>
<dbReference type="GeneID" id="807896"/>
<dbReference type="CTD" id="4538"/>
<dbReference type="eggNOG" id="KOG4845">
    <property type="taxonomic scope" value="Eukaryota"/>
</dbReference>
<dbReference type="InParanoid" id="P03907"/>
<dbReference type="Proteomes" id="UP000001519">
    <property type="component" value="Mitochondrion"/>
</dbReference>
<dbReference type="GO" id="GO:0005743">
    <property type="term" value="C:mitochondrial inner membrane"/>
    <property type="evidence" value="ECO:0000250"/>
    <property type="project" value="UniProtKB"/>
</dbReference>
<dbReference type="GO" id="GO:0045271">
    <property type="term" value="C:respiratory chain complex I"/>
    <property type="evidence" value="ECO:0000318"/>
    <property type="project" value="GO_Central"/>
</dbReference>
<dbReference type="GO" id="GO:0008137">
    <property type="term" value="F:NADH dehydrogenase (ubiquinone) activity"/>
    <property type="evidence" value="ECO:0000250"/>
    <property type="project" value="UniProtKB"/>
</dbReference>
<dbReference type="GO" id="GO:0048039">
    <property type="term" value="F:ubiquinone binding"/>
    <property type="evidence" value="ECO:0000318"/>
    <property type="project" value="GO_Central"/>
</dbReference>
<dbReference type="GO" id="GO:0009060">
    <property type="term" value="P:aerobic respiration"/>
    <property type="evidence" value="ECO:0000318"/>
    <property type="project" value="GO_Central"/>
</dbReference>
<dbReference type="GO" id="GO:0015990">
    <property type="term" value="P:electron transport coupled proton transport"/>
    <property type="evidence" value="ECO:0000318"/>
    <property type="project" value="GO_Central"/>
</dbReference>
<dbReference type="GO" id="GO:0006120">
    <property type="term" value="P:mitochondrial electron transport, NADH to ubiquinone"/>
    <property type="evidence" value="ECO:0000250"/>
    <property type="project" value="UniProtKB"/>
</dbReference>
<dbReference type="GO" id="GO:0032981">
    <property type="term" value="P:mitochondrial respiratory chain complex I assembly"/>
    <property type="evidence" value="ECO:0000250"/>
    <property type="project" value="UniProtKB"/>
</dbReference>
<dbReference type="InterPro" id="IPR000260">
    <property type="entry name" value="NADH4_N"/>
</dbReference>
<dbReference type="InterPro" id="IPR010227">
    <property type="entry name" value="NADH_Q_OxRdtase_chainM/4"/>
</dbReference>
<dbReference type="InterPro" id="IPR003918">
    <property type="entry name" value="NADH_UbQ_OxRdtase"/>
</dbReference>
<dbReference type="InterPro" id="IPR001750">
    <property type="entry name" value="ND/Mrp_TM"/>
</dbReference>
<dbReference type="NCBIfam" id="TIGR01972">
    <property type="entry name" value="NDH_I_M"/>
    <property type="match status" value="1"/>
</dbReference>
<dbReference type="PANTHER" id="PTHR43507">
    <property type="entry name" value="NADH-UBIQUINONE OXIDOREDUCTASE CHAIN 4"/>
    <property type="match status" value="1"/>
</dbReference>
<dbReference type="PANTHER" id="PTHR43507:SF20">
    <property type="entry name" value="NADH-UBIQUINONE OXIDOREDUCTASE CHAIN 4"/>
    <property type="match status" value="1"/>
</dbReference>
<dbReference type="Pfam" id="PF01059">
    <property type="entry name" value="Oxidored_q5_N"/>
    <property type="match status" value="1"/>
</dbReference>
<dbReference type="Pfam" id="PF00361">
    <property type="entry name" value="Proton_antipo_M"/>
    <property type="match status" value="1"/>
</dbReference>
<dbReference type="PRINTS" id="PR01437">
    <property type="entry name" value="NUOXDRDTASE4"/>
</dbReference>
<proteinExistence type="inferred from homology"/>
<protein>
    <recommendedName>
        <fullName>NADH-ubiquinone oxidoreductase chain 4</fullName>
        <ecNumber evidence="1">7.1.1.2</ecNumber>
    </recommendedName>
    <alternativeName>
        <fullName>NADH dehydrogenase subunit 4</fullName>
    </alternativeName>
</protein>
<accession>P03907</accession>
<accession>Q9T9Y4</accession>
<name>NU4M_GORGO</name>
<evidence type="ECO:0000250" key="1">
    <source>
        <dbReference type="UniProtKB" id="P03905"/>
    </source>
</evidence>
<evidence type="ECO:0000250" key="2">
    <source>
        <dbReference type="UniProtKB" id="P03910"/>
    </source>
</evidence>
<evidence type="ECO:0000255" key="3"/>
<evidence type="ECO:0000305" key="4"/>
<sequence>MLKLIAPTIMLLPLTWLSKKHMIWINTTTHSLIISIIPLLFFNQINNNLFSYSLSFSSDPLTTPLLMLTTWLLPLTIMASQRHLSNEPLSRKKLYLSMLISLQISLIMTFTATELIMFYIFFEATLIPTLVIITRWGNQPERLNAGTYFLFYTLVGSLPLLIALIHTHNTLGSLNILLLTLTAQELPNSWANNLMWLAYTMAFMVKMPLYGLHLWLPKAHVEAPIAGSMMLAAVLLKLGGYGMMRLMLILNPLTKHMAYPFLALSLWGMIMTSSISLRQTDLKSLIAYSSISHMALVVAAILIQTPWSFTGAVVLMIAHGLTSSLLFCLANSNYERTHSRIMILSQGLQTLLPLMALWWLLASLANLALPPTINLLGELSVLVTTFSWSNTTLLLTGSNMLITALYSLYMFTTTQWGPLTHHITNMKPSFTRENILMFMHLSPILLLSLNPDIITGFTS</sequence>
<comment type="function">
    <text evidence="1">Core subunit of the mitochondrial membrane respiratory chain NADH dehydrogenase (Complex I) which catalyzes electron transfer from NADH through the respiratory chain, using ubiquinone as an electron acceptor. Essential for the catalytic activity and assembly of complex I.</text>
</comment>
<comment type="catalytic activity">
    <reaction evidence="1">
        <text>a ubiquinone + NADH + 5 H(+)(in) = a ubiquinol + NAD(+) + 4 H(+)(out)</text>
        <dbReference type="Rhea" id="RHEA:29091"/>
        <dbReference type="Rhea" id="RHEA-COMP:9565"/>
        <dbReference type="Rhea" id="RHEA-COMP:9566"/>
        <dbReference type="ChEBI" id="CHEBI:15378"/>
        <dbReference type="ChEBI" id="CHEBI:16389"/>
        <dbReference type="ChEBI" id="CHEBI:17976"/>
        <dbReference type="ChEBI" id="CHEBI:57540"/>
        <dbReference type="ChEBI" id="CHEBI:57945"/>
        <dbReference type="EC" id="7.1.1.2"/>
    </reaction>
</comment>
<comment type="subunit">
    <text evidence="2">Core subunit of respiratory chain NADH dehydrogenase (Complex I) which is composed of 45 different subunits.</text>
</comment>
<comment type="subcellular location">
    <subcellularLocation>
        <location evidence="2">Mitochondrion inner membrane</location>
        <topology evidence="3">Multi-pass membrane protein</topology>
    </subcellularLocation>
</comment>
<comment type="similarity">
    <text evidence="4">Belongs to the complex I subunit 4 family.</text>
</comment>
<gene>
    <name type="primary">MT-ND4</name>
    <name type="synonym">MTND4</name>
    <name type="synonym">NADH4</name>
    <name type="synonym">ND4</name>
</gene>
<geneLocation type="mitochondrion"/>
<keyword id="KW-0249">Electron transport</keyword>
<keyword id="KW-0472">Membrane</keyword>
<keyword id="KW-0496">Mitochondrion</keyword>
<keyword id="KW-0999">Mitochondrion inner membrane</keyword>
<keyword id="KW-0520">NAD</keyword>
<keyword id="KW-1185">Reference proteome</keyword>
<keyword id="KW-0679">Respiratory chain</keyword>
<keyword id="KW-1278">Translocase</keyword>
<keyword id="KW-0812">Transmembrane</keyword>
<keyword id="KW-1133">Transmembrane helix</keyword>
<keyword id="KW-0813">Transport</keyword>
<keyword id="KW-0830">Ubiquinone</keyword>
<reference key="1">
    <citation type="journal article" date="1995" name="Proc. Natl. Acad. Sci. U.S.A.">
        <title>Recent African origin of modern humans revealed by complete sequences of hominoid mitochondrial DNAs.</title>
        <authorList>
            <person name="Horai S."/>
            <person name="Hayasaka K."/>
            <person name="Kondo R."/>
            <person name="Tsugane K."/>
            <person name="Takahata N."/>
        </authorList>
    </citation>
    <scope>NUCLEOTIDE SEQUENCE [GENOMIC DNA]</scope>
</reference>
<reference key="2">
    <citation type="journal article" date="1982" name="J. Mol. Evol.">
        <title>Mitochondrial DNA sequences of primates: tempo and mode of evolution.</title>
        <authorList>
            <person name="Brown W.M."/>
            <person name="Prager E.M."/>
            <person name="Wang A."/>
            <person name="Wilson A.C."/>
        </authorList>
    </citation>
    <scope>NUCLEOTIDE SEQUENCE [GENOMIC DNA] OF 308-459</scope>
</reference>